<proteinExistence type="inferred from homology"/>
<reference key="1">
    <citation type="journal article" date="2006" name="J. Bacteriol.">
        <title>Whole-genome sequence of Listeria welshimeri reveals common steps in genome reduction with Listeria innocua as compared to Listeria monocytogenes.</title>
        <authorList>
            <person name="Hain T."/>
            <person name="Steinweg C."/>
            <person name="Kuenne C.T."/>
            <person name="Billion A."/>
            <person name="Ghai R."/>
            <person name="Chatterjee S.S."/>
            <person name="Domann E."/>
            <person name="Kaerst U."/>
            <person name="Goesmann A."/>
            <person name="Bekel T."/>
            <person name="Bartels D."/>
            <person name="Kaiser O."/>
            <person name="Meyer F."/>
            <person name="Puehler A."/>
            <person name="Weisshaar B."/>
            <person name="Wehland J."/>
            <person name="Liang C."/>
            <person name="Dandekar T."/>
            <person name="Lampidis R."/>
            <person name="Kreft J."/>
            <person name="Goebel W."/>
            <person name="Chakraborty T."/>
        </authorList>
    </citation>
    <scope>NUCLEOTIDE SEQUENCE [LARGE SCALE GENOMIC DNA]</scope>
    <source>
        <strain>ATCC 35897 / DSM 20650 / CCUG 15529 / CIP 8149 / NCTC 11857 / SLCC 5334 / V8</strain>
    </source>
</reference>
<gene>
    <name evidence="1" type="primary">glmU</name>
    <name type="ordered locus">lwe0167</name>
</gene>
<feature type="chain" id="PRO_1000056172" description="Bifunctional protein GlmU">
    <location>
        <begin position="1"/>
        <end position="457"/>
    </location>
</feature>
<feature type="region of interest" description="Pyrophosphorylase" evidence="1">
    <location>
        <begin position="1"/>
        <end position="230"/>
    </location>
</feature>
<feature type="region of interest" description="Linker" evidence="1">
    <location>
        <begin position="231"/>
        <end position="251"/>
    </location>
</feature>
<feature type="region of interest" description="N-acetyltransferase" evidence="1">
    <location>
        <begin position="252"/>
        <end position="457"/>
    </location>
</feature>
<feature type="active site" description="Proton acceptor" evidence="1">
    <location>
        <position position="363"/>
    </location>
</feature>
<feature type="binding site" evidence="1">
    <location>
        <begin position="9"/>
        <end position="12"/>
    </location>
    <ligand>
        <name>UDP-N-acetyl-alpha-D-glucosamine</name>
        <dbReference type="ChEBI" id="CHEBI:57705"/>
    </ligand>
</feature>
<feature type="binding site" evidence="1">
    <location>
        <position position="23"/>
    </location>
    <ligand>
        <name>UDP-N-acetyl-alpha-D-glucosamine</name>
        <dbReference type="ChEBI" id="CHEBI:57705"/>
    </ligand>
</feature>
<feature type="binding site" evidence="1">
    <location>
        <position position="73"/>
    </location>
    <ligand>
        <name>UDP-N-acetyl-alpha-D-glucosamine</name>
        <dbReference type="ChEBI" id="CHEBI:57705"/>
    </ligand>
</feature>
<feature type="binding site" evidence="1">
    <location>
        <begin position="78"/>
        <end position="79"/>
    </location>
    <ligand>
        <name>UDP-N-acetyl-alpha-D-glucosamine</name>
        <dbReference type="ChEBI" id="CHEBI:57705"/>
    </ligand>
</feature>
<feature type="binding site" evidence="1">
    <location>
        <position position="103"/>
    </location>
    <ligand>
        <name>Mg(2+)</name>
        <dbReference type="ChEBI" id="CHEBI:18420"/>
    </ligand>
</feature>
<feature type="binding site" evidence="1">
    <location>
        <position position="140"/>
    </location>
    <ligand>
        <name>UDP-N-acetyl-alpha-D-glucosamine</name>
        <dbReference type="ChEBI" id="CHEBI:57705"/>
    </ligand>
</feature>
<feature type="binding site" evidence="1">
    <location>
        <position position="155"/>
    </location>
    <ligand>
        <name>UDP-N-acetyl-alpha-D-glucosamine</name>
        <dbReference type="ChEBI" id="CHEBI:57705"/>
    </ligand>
</feature>
<feature type="binding site" evidence="1">
    <location>
        <position position="170"/>
    </location>
    <ligand>
        <name>UDP-N-acetyl-alpha-D-glucosamine</name>
        <dbReference type="ChEBI" id="CHEBI:57705"/>
    </ligand>
</feature>
<feature type="binding site" evidence="1">
    <location>
        <position position="228"/>
    </location>
    <ligand>
        <name>Mg(2+)</name>
        <dbReference type="ChEBI" id="CHEBI:18420"/>
    </ligand>
</feature>
<feature type="binding site" evidence="1">
    <location>
        <position position="228"/>
    </location>
    <ligand>
        <name>UDP-N-acetyl-alpha-D-glucosamine</name>
        <dbReference type="ChEBI" id="CHEBI:57705"/>
    </ligand>
</feature>
<feature type="binding site" evidence="1">
    <location>
        <position position="333"/>
    </location>
    <ligand>
        <name>UDP-N-acetyl-alpha-D-glucosamine</name>
        <dbReference type="ChEBI" id="CHEBI:57705"/>
    </ligand>
</feature>
<feature type="binding site" evidence="1">
    <location>
        <position position="351"/>
    </location>
    <ligand>
        <name>UDP-N-acetyl-alpha-D-glucosamine</name>
        <dbReference type="ChEBI" id="CHEBI:57705"/>
    </ligand>
</feature>
<feature type="binding site" evidence="1">
    <location>
        <position position="366"/>
    </location>
    <ligand>
        <name>UDP-N-acetyl-alpha-D-glucosamine</name>
        <dbReference type="ChEBI" id="CHEBI:57705"/>
    </ligand>
</feature>
<feature type="binding site" evidence="1">
    <location>
        <position position="377"/>
    </location>
    <ligand>
        <name>UDP-N-acetyl-alpha-D-glucosamine</name>
        <dbReference type="ChEBI" id="CHEBI:57705"/>
    </ligand>
</feature>
<feature type="binding site" evidence="1">
    <location>
        <begin position="386"/>
        <end position="387"/>
    </location>
    <ligand>
        <name>acetyl-CoA</name>
        <dbReference type="ChEBI" id="CHEBI:57288"/>
    </ligand>
</feature>
<feature type="binding site" evidence="1">
    <location>
        <position position="423"/>
    </location>
    <ligand>
        <name>acetyl-CoA</name>
        <dbReference type="ChEBI" id="CHEBI:57288"/>
    </ligand>
</feature>
<feature type="binding site" evidence="1">
    <location>
        <position position="440"/>
    </location>
    <ligand>
        <name>acetyl-CoA</name>
        <dbReference type="ChEBI" id="CHEBI:57288"/>
    </ligand>
</feature>
<accession>A0AF03</accession>
<evidence type="ECO:0000255" key="1">
    <source>
        <dbReference type="HAMAP-Rule" id="MF_01631"/>
    </source>
</evidence>
<comment type="function">
    <text evidence="1">Catalyzes the last two sequential reactions in the de novo biosynthetic pathway for UDP-N-acetylglucosamine (UDP-GlcNAc). The C-terminal domain catalyzes the transfer of acetyl group from acetyl coenzyme A to glucosamine-1-phosphate (GlcN-1-P) to produce N-acetylglucosamine-1-phosphate (GlcNAc-1-P), which is converted into UDP-GlcNAc by the transfer of uridine 5-monophosphate (from uridine 5-triphosphate), a reaction catalyzed by the N-terminal domain.</text>
</comment>
<comment type="catalytic activity">
    <reaction evidence="1">
        <text>alpha-D-glucosamine 1-phosphate + acetyl-CoA = N-acetyl-alpha-D-glucosamine 1-phosphate + CoA + H(+)</text>
        <dbReference type="Rhea" id="RHEA:13725"/>
        <dbReference type="ChEBI" id="CHEBI:15378"/>
        <dbReference type="ChEBI" id="CHEBI:57287"/>
        <dbReference type="ChEBI" id="CHEBI:57288"/>
        <dbReference type="ChEBI" id="CHEBI:57776"/>
        <dbReference type="ChEBI" id="CHEBI:58516"/>
        <dbReference type="EC" id="2.3.1.157"/>
    </reaction>
</comment>
<comment type="catalytic activity">
    <reaction evidence="1">
        <text>N-acetyl-alpha-D-glucosamine 1-phosphate + UTP + H(+) = UDP-N-acetyl-alpha-D-glucosamine + diphosphate</text>
        <dbReference type="Rhea" id="RHEA:13509"/>
        <dbReference type="ChEBI" id="CHEBI:15378"/>
        <dbReference type="ChEBI" id="CHEBI:33019"/>
        <dbReference type="ChEBI" id="CHEBI:46398"/>
        <dbReference type="ChEBI" id="CHEBI:57705"/>
        <dbReference type="ChEBI" id="CHEBI:57776"/>
        <dbReference type="EC" id="2.7.7.23"/>
    </reaction>
</comment>
<comment type="cofactor">
    <cofactor evidence="1">
        <name>Mg(2+)</name>
        <dbReference type="ChEBI" id="CHEBI:18420"/>
    </cofactor>
    <text evidence="1">Binds 1 Mg(2+) ion per subunit.</text>
</comment>
<comment type="pathway">
    <text evidence="1">Nucleotide-sugar biosynthesis; UDP-N-acetyl-alpha-D-glucosamine biosynthesis; N-acetyl-alpha-D-glucosamine 1-phosphate from alpha-D-glucosamine 6-phosphate (route II): step 2/2.</text>
</comment>
<comment type="pathway">
    <text evidence="1">Nucleotide-sugar biosynthesis; UDP-N-acetyl-alpha-D-glucosamine biosynthesis; UDP-N-acetyl-alpha-D-glucosamine from N-acetyl-alpha-D-glucosamine 1-phosphate: step 1/1.</text>
</comment>
<comment type="pathway">
    <text evidence="1">Bacterial outer membrane biogenesis; LPS lipid A biosynthesis.</text>
</comment>
<comment type="subunit">
    <text evidence="1">Homotrimer.</text>
</comment>
<comment type="subcellular location">
    <subcellularLocation>
        <location evidence="1">Cytoplasm</location>
    </subcellularLocation>
</comment>
<comment type="similarity">
    <text evidence="1">In the N-terminal section; belongs to the N-acetylglucosamine-1-phosphate uridyltransferase family.</text>
</comment>
<comment type="similarity">
    <text evidence="1">In the C-terminal section; belongs to the transferase hexapeptide repeat family.</text>
</comment>
<name>GLMU_LISW6</name>
<protein>
    <recommendedName>
        <fullName evidence="1">Bifunctional protein GlmU</fullName>
    </recommendedName>
    <domain>
        <recommendedName>
            <fullName evidence="1">UDP-N-acetylglucosamine pyrophosphorylase</fullName>
            <ecNumber evidence="1">2.7.7.23</ecNumber>
        </recommendedName>
        <alternativeName>
            <fullName evidence="1">N-acetylglucosamine-1-phosphate uridyltransferase</fullName>
        </alternativeName>
    </domain>
    <domain>
        <recommendedName>
            <fullName evidence="1">Glucosamine-1-phosphate N-acetyltransferase</fullName>
            <ecNumber evidence="1">2.3.1.157</ecNumber>
        </recommendedName>
    </domain>
</protein>
<dbReference type="EC" id="2.7.7.23" evidence="1"/>
<dbReference type="EC" id="2.3.1.157" evidence="1"/>
<dbReference type="EMBL" id="AM263198">
    <property type="protein sequence ID" value="CAK19585.1"/>
    <property type="molecule type" value="Genomic_DNA"/>
</dbReference>
<dbReference type="RefSeq" id="WP_011701033.1">
    <property type="nucleotide sequence ID" value="NC_008555.1"/>
</dbReference>
<dbReference type="SMR" id="A0AF03"/>
<dbReference type="STRING" id="386043.lwe0167"/>
<dbReference type="GeneID" id="61188047"/>
<dbReference type="KEGG" id="lwe:lwe0167"/>
<dbReference type="eggNOG" id="COG1207">
    <property type="taxonomic scope" value="Bacteria"/>
</dbReference>
<dbReference type="HOGENOM" id="CLU_029499_15_2_9"/>
<dbReference type="OrthoDB" id="9775031at2"/>
<dbReference type="UniPathway" id="UPA00113">
    <property type="reaction ID" value="UER00532"/>
</dbReference>
<dbReference type="UniPathway" id="UPA00113">
    <property type="reaction ID" value="UER00533"/>
</dbReference>
<dbReference type="UniPathway" id="UPA00973"/>
<dbReference type="Proteomes" id="UP000000779">
    <property type="component" value="Chromosome"/>
</dbReference>
<dbReference type="GO" id="GO:0005737">
    <property type="term" value="C:cytoplasm"/>
    <property type="evidence" value="ECO:0007669"/>
    <property type="project" value="UniProtKB-SubCell"/>
</dbReference>
<dbReference type="GO" id="GO:0016020">
    <property type="term" value="C:membrane"/>
    <property type="evidence" value="ECO:0007669"/>
    <property type="project" value="GOC"/>
</dbReference>
<dbReference type="GO" id="GO:0019134">
    <property type="term" value="F:glucosamine-1-phosphate N-acetyltransferase activity"/>
    <property type="evidence" value="ECO:0007669"/>
    <property type="project" value="UniProtKB-UniRule"/>
</dbReference>
<dbReference type="GO" id="GO:0000287">
    <property type="term" value="F:magnesium ion binding"/>
    <property type="evidence" value="ECO:0007669"/>
    <property type="project" value="UniProtKB-UniRule"/>
</dbReference>
<dbReference type="GO" id="GO:0003977">
    <property type="term" value="F:UDP-N-acetylglucosamine diphosphorylase activity"/>
    <property type="evidence" value="ECO:0007669"/>
    <property type="project" value="UniProtKB-UniRule"/>
</dbReference>
<dbReference type="GO" id="GO:0000902">
    <property type="term" value="P:cell morphogenesis"/>
    <property type="evidence" value="ECO:0007669"/>
    <property type="project" value="UniProtKB-UniRule"/>
</dbReference>
<dbReference type="GO" id="GO:0071555">
    <property type="term" value="P:cell wall organization"/>
    <property type="evidence" value="ECO:0007669"/>
    <property type="project" value="UniProtKB-KW"/>
</dbReference>
<dbReference type="GO" id="GO:0009245">
    <property type="term" value="P:lipid A biosynthetic process"/>
    <property type="evidence" value="ECO:0007669"/>
    <property type="project" value="UniProtKB-UniRule"/>
</dbReference>
<dbReference type="GO" id="GO:0009252">
    <property type="term" value="P:peptidoglycan biosynthetic process"/>
    <property type="evidence" value="ECO:0007669"/>
    <property type="project" value="UniProtKB-UniRule"/>
</dbReference>
<dbReference type="GO" id="GO:0008360">
    <property type="term" value="P:regulation of cell shape"/>
    <property type="evidence" value="ECO:0007669"/>
    <property type="project" value="UniProtKB-KW"/>
</dbReference>
<dbReference type="GO" id="GO:0006048">
    <property type="term" value="P:UDP-N-acetylglucosamine biosynthetic process"/>
    <property type="evidence" value="ECO:0007669"/>
    <property type="project" value="UniProtKB-UniPathway"/>
</dbReference>
<dbReference type="CDD" id="cd02540">
    <property type="entry name" value="GT2_GlmU_N_bac"/>
    <property type="match status" value="1"/>
</dbReference>
<dbReference type="CDD" id="cd03353">
    <property type="entry name" value="LbH_GlmU_C"/>
    <property type="match status" value="1"/>
</dbReference>
<dbReference type="Gene3D" id="2.160.10.10">
    <property type="entry name" value="Hexapeptide repeat proteins"/>
    <property type="match status" value="1"/>
</dbReference>
<dbReference type="Gene3D" id="3.90.550.10">
    <property type="entry name" value="Spore Coat Polysaccharide Biosynthesis Protein SpsA, Chain A"/>
    <property type="match status" value="1"/>
</dbReference>
<dbReference type="HAMAP" id="MF_01631">
    <property type="entry name" value="GlmU"/>
    <property type="match status" value="1"/>
</dbReference>
<dbReference type="InterPro" id="IPR005882">
    <property type="entry name" value="Bifunctional_GlmU"/>
</dbReference>
<dbReference type="InterPro" id="IPR050065">
    <property type="entry name" value="GlmU-like"/>
</dbReference>
<dbReference type="InterPro" id="IPR038009">
    <property type="entry name" value="GlmU_C_LbH"/>
</dbReference>
<dbReference type="InterPro" id="IPR001451">
    <property type="entry name" value="Hexapep"/>
</dbReference>
<dbReference type="InterPro" id="IPR018357">
    <property type="entry name" value="Hexapep_transf_CS"/>
</dbReference>
<dbReference type="InterPro" id="IPR005835">
    <property type="entry name" value="NTP_transferase_dom"/>
</dbReference>
<dbReference type="InterPro" id="IPR029044">
    <property type="entry name" value="Nucleotide-diphossugar_trans"/>
</dbReference>
<dbReference type="InterPro" id="IPR011004">
    <property type="entry name" value="Trimer_LpxA-like_sf"/>
</dbReference>
<dbReference type="NCBIfam" id="TIGR01173">
    <property type="entry name" value="glmU"/>
    <property type="match status" value="1"/>
</dbReference>
<dbReference type="NCBIfam" id="NF010934">
    <property type="entry name" value="PRK14354.1"/>
    <property type="match status" value="1"/>
</dbReference>
<dbReference type="PANTHER" id="PTHR43584:SF3">
    <property type="entry name" value="BIFUNCTIONAL PROTEIN GLMU"/>
    <property type="match status" value="1"/>
</dbReference>
<dbReference type="PANTHER" id="PTHR43584">
    <property type="entry name" value="NUCLEOTIDYL TRANSFERASE"/>
    <property type="match status" value="1"/>
</dbReference>
<dbReference type="Pfam" id="PF00132">
    <property type="entry name" value="Hexapep"/>
    <property type="match status" value="3"/>
</dbReference>
<dbReference type="Pfam" id="PF00483">
    <property type="entry name" value="NTP_transferase"/>
    <property type="match status" value="1"/>
</dbReference>
<dbReference type="SUPFAM" id="SSF53448">
    <property type="entry name" value="Nucleotide-diphospho-sugar transferases"/>
    <property type="match status" value="1"/>
</dbReference>
<dbReference type="SUPFAM" id="SSF51161">
    <property type="entry name" value="Trimeric LpxA-like enzymes"/>
    <property type="match status" value="1"/>
</dbReference>
<dbReference type="PROSITE" id="PS00101">
    <property type="entry name" value="HEXAPEP_TRANSFERASES"/>
    <property type="match status" value="1"/>
</dbReference>
<sequence>MSKRYAVVLAAGQGTRMKSKLYKVLHPVCGKPMVEHVVDQISTLDVDKVVTIVGHGAEKVQEHLAGKSEFVKQEEQLGTAHAVLQAKPELAGKDGVTLVVCGDTPLIEASTMEALLKYHHEKRAKATILTTVIEDPTGYGRIIRDDLGIVEKIVEHKDATEKEQRISEINTGTYCFDNKALFEALENVSNDNVQGEYYLPDVIKILKDLDEVVAAYRMESFEESLGVNDRIALAEASKLMQRRINDNHMRNGVTLVNPENTYIDIDVKIGQDTVIEPGVMLRGNTVIGDDCVISSGSEIANSVIGERVHVRNSSIFESKVGDDVQIGPYAHLRPESDIHNHVKIGNYVETKKAIVGEGTKLPHFIYMGDAEIGKNVNVGCGSIAVNYDGKNKAKTIIGDDVFVGCNSNLIAPVKVGDRAFIAAGSTITKDVPEDALGIARAKQENKMDYAKRLNHGK</sequence>
<organism>
    <name type="scientific">Listeria welshimeri serovar 6b (strain ATCC 35897 / DSM 20650 / CCUG 15529 / CIP 8149 / NCTC 11857 / SLCC 5334 / V8)</name>
    <dbReference type="NCBI Taxonomy" id="386043"/>
    <lineage>
        <taxon>Bacteria</taxon>
        <taxon>Bacillati</taxon>
        <taxon>Bacillota</taxon>
        <taxon>Bacilli</taxon>
        <taxon>Bacillales</taxon>
        <taxon>Listeriaceae</taxon>
        <taxon>Listeria</taxon>
    </lineage>
</organism>
<keyword id="KW-0012">Acyltransferase</keyword>
<keyword id="KW-0133">Cell shape</keyword>
<keyword id="KW-0961">Cell wall biogenesis/degradation</keyword>
<keyword id="KW-0963">Cytoplasm</keyword>
<keyword id="KW-0460">Magnesium</keyword>
<keyword id="KW-0479">Metal-binding</keyword>
<keyword id="KW-0511">Multifunctional enzyme</keyword>
<keyword id="KW-0548">Nucleotidyltransferase</keyword>
<keyword id="KW-0573">Peptidoglycan synthesis</keyword>
<keyword id="KW-0677">Repeat</keyword>
<keyword id="KW-0808">Transferase</keyword>